<accession>Q55AS5</accession>
<proteinExistence type="evidence at transcript level"/>
<evidence type="ECO:0000255" key="1">
    <source>
        <dbReference type="PROSITE-ProRule" id="PRU01019"/>
    </source>
</evidence>
<evidence type="ECO:0000269" key="2">
    <source>
    </source>
</evidence>
<organism>
    <name type="scientific">Dictyostelium discoideum</name>
    <name type="common">Social amoeba</name>
    <dbReference type="NCBI Taxonomy" id="44689"/>
    <lineage>
        <taxon>Eukaryota</taxon>
        <taxon>Amoebozoa</taxon>
        <taxon>Evosea</taxon>
        <taxon>Eumycetozoa</taxon>
        <taxon>Dictyostelia</taxon>
        <taxon>Dictyosteliales</taxon>
        <taxon>Dictyosteliaceae</taxon>
        <taxon>Dictyostelium</taxon>
    </lineage>
</organism>
<feature type="chain" id="PRO_0000393912" description="Probable caffeoyl-CoA O-methyltransferase 3">
    <location>
        <begin position="1"/>
        <end position="251"/>
    </location>
</feature>
<feature type="binding site" evidence="1">
    <location>
        <position position="61"/>
    </location>
    <ligand>
        <name>S-adenosyl-L-methionine</name>
        <dbReference type="ChEBI" id="CHEBI:59789"/>
    </ligand>
</feature>
<feature type="binding site" evidence="1">
    <location>
        <position position="83"/>
    </location>
    <ligand>
        <name>S-adenosyl-L-methionine</name>
        <dbReference type="ChEBI" id="CHEBI:59789"/>
    </ligand>
</feature>
<feature type="binding site" evidence="1">
    <location>
        <begin position="85"/>
        <end position="86"/>
    </location>
    <ligand>
        <name>S-adenosyl-L-methionine</name>
        <dbReference type="ChEBI" id="CHEBI:59789"/>
    </ligand>
</feature>
<feature type="binding site" evidence="1">
    <location>
        <position position="91"/>
    </location>
    <ligand>
        <name>S-adenosyl-L-methionine</name>
        <dbReference type="ChEBI" id="CHEBI:59789"/>
    </ligand>
</feature>
<feature type="binding site" evidence="1">
    <location>
        <position position="109"/>
    </location>
    <ligand>
        <name>S-adenosyl-L-methionine</name>
        <dbReference type="ChEBI" id="CHEBI:59789"/>
    </ligand>
</feature>
<feature type="binding site" evidence="1">
    <location>
        <position position="138"/>
    </location>
    <ligand>
        <name>S-adenosyl-L-methionine</name>
        <dbReference type="ChEBI" id="CHEBI:59789"/>
    </ligand>
</feature>
<feature type="binding site" evidence="1">
    <location>
        <position position="160"/>
    </location>
    <ligand>
        <name>a divalent metal cation</name>
        <dbReference type="ChEBI" id="CHEBI:60240"/>
    </ligand>
</feature>
<feature type="binding site" evidence="1">
    <location>
        <position position="162"/>
    </location>
    <ligand>
        <name>S-adenosyl-L-methionine</name>
        <dbReference type="ChEBI" id="CHEBI:59789"/>
    </ligand>
</feature>
<feature type="binding site" evidence="1">
    <location>
        <position position="186"/>
    </location>
    <ligand>
        <name>a divalent metal cation</name>
        <dbReference type="ChEBI" id="CHEBI:60240"/>
    </ligand>
</feature>
<feature type="binding site" evidence="1">
    <location>
        <position position="187"/>
    </location>
    <ligand>
        <name>a divalent metal cation</name>
        <dbReference type="ChEBI" id="CHEBI:60240"/>
    </ligand>
</feature>
<name>CAMT3_DICDI</name>
<keyword id="KW-0479">Metal-binding</keyword>
<keyword id="KW-0489">Methyltransferase</keyword>
<keyword id="KW-1185">Reference proteome</keyword>
<keyword id="KW-0949">S-adenosyl-L-methionine</keyword>
<keyword id="KW-0808">Transferase</keyword>
<sequence>MDSENFKQHLKKLYSVNNGKVKITNEIVKFTQNHSEPLHQVQKDLINYTNTNFESNSYMLTDGNQNQFFTLLLKVLNAKKAIDVGVYTGLSSLSFALSMPDDGKVTSIDCVRDYEECCHLHWKKANVDHKINLVIDNAKNHLQKLIDNGESGTFDFIFIDADKDSYDAYYELSLKLIRKGGIIAFDNILFFGATLVDHDSKKPEDQIFLGCPSFQRMVDALKLLNEKIANDERVIKTMLPLSDGITLVTKK</sequence>
<comment type="catalytic activity">
    <reaction>
        <text>(E)-caffeoyl-CoA + S-adenosyl-L-methionine = (E)-feruloyl-CoA + S-adenosyl-L-homocysteine + H(+)</text>
        <dbReference type="Rhea" id="RHEA:16925"/>
        <dbReference type="ChEBI" id="CHEBI:15378"/>
        <dbReference type="ChEBI" id="CHEBI:57856"/>
        <dbReference type="ChEBI" id="CHEBI:59789"/>
        <dbReference type="ChEBI" id="CHEBI:87136"/>
        <dbReference type="ChEBI" id="CHEBI:87305"/>
        <dbReference type="EC" id="2.1.1.104"/>
    </reaction>
</comment>
<comment type="induction">
    <text evidence="2">Down-regulated by phagocytic stimuli.</text>
</comment>
<comment type="similarity">
    <text evidence="1">Belongs to the class I-like SAM-binding methyltransferase superfamily. Cation-dependent O-methyltransferase family. CCoAMT subfamily.</text>
</comment>
<gene>
    <name type="primary">omt1</name>
    <name type="ORF">DDB_G0271590</name>
</gene>
<protein>
    <recommendedName>
        <fullName>Probable caffeoyl-CoA O-methyltransferase 3</fullName>
        <ecNumber>2.1.1.104</ecNumber>
    </recommendedName>
    <alternativeName>
        <fullName>O-methyltransferase 1</fullName>
    </alternativeName>
</protein>
<dbReference type="EC" id="2.1.1.104"/>
<dbReference type="EMBL" id="AAFI02000006">
    <property type="protein sequence ID" value="EAL71659.1"/>
    <property type="molecule type" value="Genomic_DNA"/>
</dbReference>
<dbReference type="RefSeq" id="XP_645621.1">
    <property type="nucleotide sequence ID" value="XM_640529.1"/>
</dbReference>
<dbReference type="SMR" id="Q55AS5"/>
<dbReference type="FunCoup" id="Q55AS5">
    <property type="interactions" value="8"/>
</dbReference>
<dbReference type="STRING" id="44689.Q55AS5"/>
<dbReference type="PaxDb" id="44689-DDB0266729"/>
<dbReference type="EnsemblProtists" id="EAL71659">
    <property type="protein sequence ID" value="EAL71659"/>
    <property type="gene ID" value="DDB_G0271590"/>
</dbReference>
<dbReference type="GeneID" id="8618075"/>
<dbReference type="KEGG" id="ddi:DDB_G0271590"/>
<dbReference type="dictyBase" id="DDB_G0271590">
    <property type="gene designation" value="omt1"/>
</dbReference>
<dbReference type="VEuPathDB" id="AmoebaDB:DDB_G0271590"/>
<dbReference type="eggNOG" id="KOG1663">
    <property type="taxonomic scope" value="Eukaryota"/>
</dbReference>
<dbReference type="HOGENOM" id="CLU_067676_5_1_1"/>
<dbReference type="InParanoid" id="Q55AS5"/>
<dbReference type="OMA" id="PYDMIFI"/>
<dbReference type="PhylomeDB" id="Q55AS5"/>
<dbReference type="PRO" id="PR:Q55AS5"/>
<dbReference type="Proteomes" id="UP000002195">
    <property type="component" value="Chromosome 2"/>
</dbReference>
<dbReference type="GO" id="GO:0042409">
    <property type="term" value="F:caffeoyl-CoA O-methyltransferase activity"/>
    <property type="evidence" value="ECO:0007669"/>
    <property type="project" value="UniProtKB-EC"/>
</dbReference>
<dbReference type="GO" id="GO:0046872">
    <property type="term" value="F:metal ion binding"/>
    <property type="evidence" value="ECO:0007669"/>
    <property type="project" value="UniProtKB-KW"/>
</dbReference>
<dbReference type="GO" id="GO:0008757">
    <property type="term" value="F:S-adenosylmethionine-dependent methyltransferase activity"/>
    <property type="evidence" value="ECO:0000318"/>
    <property type="project" value="GO_Central"/>
</dbReference>
<dbReference type="GO" id="GO:0032259">
    <property type="term" value="P:methylation"/>
    <property type="evidence" value="ECO:0007669"/>
    <property type="project" value="UniProtKB-KW"/>
</dbReference>
<dbReference type="Gene3D" id="3.40.50.150">
    <property type="entry name" value="Vaccinia Virus protein VP39"/>
    <property type="match status" value="1"/>
</dbReference>
<dbReference type="InterPro" id="IPR050362">
    <property type="entry name" value="Cation-dep_OMT"/>
</dbReference>
<dbReference type="InterPro" id="IPR029063">
    <property type="entry name" value="SAM-dependent_MTases_sf"/>
</dbReference>
<dbReference type="InterPro" id="IPR002935">
    <property type="entry name" value="SAM_O-MeTrfase"/>
</dbReference>
<dbReference type="PANTHER" id="PTHR10509:SF14">
    <property type="entry name" value="CAFFEOYL-COA O-METHYLTRANSFERASE 3-RELATED"/>
    <property type="match status" value="1"/>
</dbReference>
<dbReference type="PANTHER" id="PTHR10509">
    <property type="entry name" value="O-METHYLTRANSFERASE-RELATED"/>
    <property type="match status" value="1"/>
</dbReference>
<dbReference type="Pfam" id="PF01596">
    <property type="entry name" value="Methyltransf_3"/>
    <property type="match status" value="1"/>
</dbReference>
<dbReference type="SUPFAM" id="SSF53335">
    <property type="entry name" value="S-adenosyl-L-methionine-dependent methyltransferases"/>
    <property type="match status" value="1"/>
</dbReference>
<dbReference type="PROSITE" id="PS51682">
    <property type="entry name" value="SAM_OMT_I"/>
    <property type="match status" value="1"/>
</dbReference>
<reference key="1">
    <citation type="journal article" date="2002" name="Nature">
        <title>Sequence and analysis of chromosome 2 of Dictyostelium discoideum.</title>
        <authorList>
            <person name="Gloeckner G."/>
            <person name="Eichinger L."/>
            <person name="Szafranski K."/>
            <person name="Pachebat J.A."/>
            <person name="Bankier A.T."/>
            <person name="Dear P.H."/>
            <person name="Lehmann R."/>
            <person name="Baumgart C."/>
            <person name="Parra G."/>
            <person name="Abril J.F."/>
            <person name="Guigo R."/>
            <person name="Kumpf K."/>
            <person name="Tunggal B."/>
            <person name="Cox E.C."/>
            <person name="Quail M.A."/>
            <person name="Platzer M."/>
            <person name="Rosenthal A."/>
            <person name="Noegel A.A."/>
        </authorList>
    </citation>
    <scope>NUCLEOTIDE SEQUENCE [LARGE SCALE GENOMIC DNA]</scope>
    <source>
        <strain>AX4</strain>
    </source>
</reference>
<reference key="2">
    <citation type="journal article" date="2005" name="Nature">
        <title>The genome of the social amoeba Dictyostelium discoideum.</title>
        <authorList>
            <person name="Eichinger L."/>
            <person name="Pachebat J.A."/>
            <person name="Gloeckner G."/>
            <person name="Rajandream M.A."/>
            <person name="Sucgang R."/>
            <person name="Berriman M."/>
            <person name="Song J."/>
            <person name="Olsen R."/>
            <person name="Szafranski K."/>
            <person name="Xu Q."/>
            <person name="Tunggal B."/>
            <person name="Kummerfeld S."/>
            <person name="Madera M."/>
            <person name="Konfortov B.A."/>
            <person name="Rivero F."/>
            <person name="Bankier A.T."/>
            <person name="Lehmann R."/>
            <person name="Hamlin N."/>
            <person name="Davies R."/>
            <person name="Gaudet P."/>
            <person name="Fey P."/>
            <person name="Pilcher K."/>
            <person name="Chen G."/>
            <person name="Saunders D."/>
            <person name="Sodergren E.J."/>
            <person name="Davis P."/>
            <person name="Kerhornou A."/>
            <person name="Nie X."/>
            <person name="Hall N."/>
            <person name="Anjard C."/>
            <person name="Hemphill L."/>
            <person name="Bason N."/>
            <person name="Farbrother P."/>
            <person name="Desany B."/>
            <person name="Just E."/>
            <person name="Morio T."/>
            <person name="Rost R."/>
            <person name="Churcher C.M."/>
            <person name="Cooper J."/>
            <person name="Haydock S."/>
            <person name="van Driessche N."/>
            <person name="Cronin A."/>
            <person name="Goodhead I."/>
            <person name="Muzny D.M."/>
            <person name="Mourier T."/>
            <person name="Pain A."/>
            <person name="Lu M."/>
            <person name="Harper D."/>
            <person name="Lindsay R."/>
            <person name="Hauser H."/>
            <person name="James K.D."/>
            <person name="Quiles M."/>
            <person name="Madan Babu M."/>
            <person name="Saito T."/>
            <person name="Buchrieser C."/>
            <person name="Wardroper A."/>
            <person name="Felder M."/>
            <person name="Thangavelu M."/>
            <person name="Johnson D."/>
            <person name="Knights A."/>
            <person name="Loulseged H."/>
            <person name="Mungall K.L."/>
            <person name="Oliver K."/>
            <person name="Price C."/>
            <person name="Quail M.A."/>
            <person name="Urushihara H."/>
            <person name="Hernandez J."/>
            <person name="Rabbinowitsch E."/>
            <person name="Steffen D."/>
            <person name="Sanders M."/>
            <person name="Ma J."/>
            <person name="Kohara Y."/>
            <person name="Sharp S."/>
            <person name="Simmonds M.N."/>
            <person name="Spiegler S."/>
            <person name="Tivey A."/>
            <person name="Sugano S."/>
            <person name="White B."/>
            <person name="Walker D."/>
            <person name="Woodward J.R."/>
            <person name="Winckler T."/>
            <person name="Tanaka Y."/>
            <person name="Shaulsky G."/>
            <person name="Schleicher M."/>
            <person name="Weinstock G.M."/>
            <person name="Rosenthal A."/>
            <person name="Cox E.C."/>
            <person name="Chisholm R.L."/>
            <person name="Gibbs R.A."/>
            <person name="Loomis W.F."/>
            <person name="Platzer M."/>
            <person name="Kay R.R."/>
            <person name="Williams J.G."/>
            <person name="Dear P.H."/>
            <person name="Noegel A.A."/>
            <person name="Barrell B.G."/>
            <person name="Kuspa A."/>
        </authorList>
    </citation>
    <scope>NUCLEOTIDE SEQUENCE [LARGE SCALE GENOMIC DNA]</scope>
    <source>
        <strain>AX4</strain>
    </source>
</reference>
<reference key="3">
    <citation type="journal article" date="2008" name="BMC Genomics">
        <title>Genome-wide transcriptional changes induced by phagocytosis or growth on bacteria in Dictyostelium.</title>
        <authorList>
            <person name="Sillo A."/>
            <person name="Bloomfield G."/>
            <person name="Balest A."/>
            <person name="Balbo A."/>
            <person name="Pergolizzi B."/>
            <person name="Peracino B."/>
            <person name="Skelton J."/>
            <person name="Ivens A."/>
            <person name="Bozzaro S."/>
        </authorList>
    </citation>
    <scope>INDUCTION [LARGE SCALE ANALYSIS]</scope>
</reference>
<reference key="4">
    <citation type="journal article" date="2008" name="J. Biol. Chem.">
        <title>Dissecting the functional role of polyketide synthases in Dictyostelium discoideum: biosynthesis of the differentiation regulating factor 4-methyl-5-pentylbenzene-1,3-diol.</title>
        <authorList>
            <person name="Ghosh R."/>
            <person name="Chhabra A."/>
            <person name="Phatale P.A."/>
            <person name="Samrat S.K."/>
            <person name="Sharma J."/>
            <person name="Gosain A."/>
            <person name="Mohanty D."/>
            <person name="Saran S."/>
            <person name="Gokhale R.S."/>
        </authorList>
    </citation>
    <scope>IDENTIFICATION</scope>
</reference>